<dbReference type="EC" id="3.4.22.29" evidence="1"/>
<dbReference type="EC" id="3.6.1.15" evidence="1"/>
<dbReference type="EC" id="3.4.22.28" evidence="11"/>
<dbReference type="EC" id="2.7.7.48" evidence="9"/>
<dbReference type="EMBL" id="D00625">
    <property type="protein sequence ID" value="BAA00516.1"/>
    <property type="status" value="ALT_SEQ"/>
    <property type="molecule type" value="Genomic_RNA"/>
</dbReference>
<dbReference type="PIR" id="A34032">
    <property type="entry name" value="GNNY2W"/>
</dbReference>
<dbReference type="SMR" id="P23069"/>
<dbReference type="MEROPS" id="C03.001"/>
<dbReference type="MEROPS" id="C03.020"/>
<dbReference type="MEROPS" id="N08.001"/>
<dbReference type="Proteomes" id="UP000008165">
    <property type="component" value="Genome"/>
</dbReference>
<dbReference type="GO" id="GO:0044162">
    <property type="term" value="C:host cell cytoplasmic vesicle membrane"/>
    <property type="evidence" value="ECO:0007669"/>
    <property type="project" value="UniProtKB-SubCell"/>
</dbReference>
<dbReference type="GO" id="GO:0042025">
    <property type="term" value="C:host cell nucleus"/>
    <property type="evidence" value="ECO:0007669"/>
    <property type="project" value="UniProtKB-SubCell"/>
</dbReference>
<dbReference type="GO" id="GO:0016020">
    <property type="term" value="C:membrane"/>
    <property type="evidence" value="ECO:0007669"/>
    <property type="project" value="UniProtKB-KW"/>
</dbReference>
<dbReference type="GO" id="GO:0039618">
    <property type="term" value="C:T=pseudo3 icosahedral viral capsid"/>
    <property type="evidence" value="ECO:0007669"/>
    <property type="project" value="UniProtKB-KW"/>
</dbReference>
<dbReference type="GO" id="GO:0005524">
    <property type="term" value="F:ATP binding"/>
    <property type="evidence" value="ECO:0007669"/>
    <property type="project" value="UniProtKB-KW"/>
</dbReference>
<dbReference type="GO" id="GO:0015267">
    <property type="term" value="F:channel activity"/>
    <property type="evidence" value="ECO:0007669"/>
    <property type="project" value="UniProtKB-KW"/>
</dbReference>
<dbReference type="GO" id="GO:0004197">
    <property type="term" value="F:cysteine-type endopeptidase activity"/>
    <property type="evidence" value="ECO:0007669"/>
    <property type="project" value="UniProtKB-EC"/>
</dbReference>
<dbReference type="GO" id="GO:0017111">
    <property type="term" value="F:ribonucleoside triphosphate phosphatase activity"/>
    <property type="evidence" value="ECO:0007669"/>
    <property type="project" value="UniProtKB-EC"/>
</dbReference>
<dbReference type="GO" id="GO:0003723">
    <property type="term" value="F:RNA binding"/>
    <property type="evidence" value="ECO:0007669"/>
    <property type="project" value="UniProtKB-KW"/>
</dbReference>
<dbReference type="GO" id="GO:0003724">
    <property type="term" value="F:RNA helicase activity"/>
    <property type="evidence" value="ECO:0007669"/>
    <property type="project" value="InterPro"/>
</dbReference>
<dbReference type="GO" id="GO:0003968">
    <property type="term" value="F:RNA-directed RNA polymerase activity"/>
    <property type="evidence" value="ECO:0007669"/>
    <property type="project" value="UniProtKB-KW"/>
</dbReference>
<dbReference type="GO" id="GO:0005198">
    <property type="term" value="F:structural molecule activity"/>
    <property type="evidence" value="ECO:0007669"/>
    <property type="project" value="InterPro"/>
</dbReference>
<dbReference type="GO" id="GO:0008270">
    <property type="term" value="F:zinc ion binding"/>
    <property type="evidence" value="ECO:0007669"/>
    <property type="project" value="UniProtKB-KW"/>
</dbReference>
<dbReference type="GO" id="GO:0006260">
    <property type="term" value="P:DNA replication"/>
    <property type="evidence" value="ECO:0007669"/>
    <property type="project" value="UniProtKB-KW"/>
</dbReference>
<dbReference type="GO" id="GO:0006351">
    <property type="term" value="P:DNA-templated transcription"/>
    <property type="evidence" value="ECO:0007669"/>
    <property type="project" value="InterPro"/>
</dbReference>
<dbReference type="GO" id="GO:0034220">
    <property type="term" value="P:monoatomic ion transmembrane transport"/>
    <property type="evidence" value="ECO:0007669"/>
    <property type="project" value="UniProtKB-KW"/>
</dbReference>
<dbReference type="GO" id="GO:0006508">
    <property type="term" value="P:proteolysis"/>
    <property type="evidence" value="ECO:0007669"/>
    <property type="project" value="UniProtKB-KW"/>
</dbReference>
<dbReference type="GO" id="GO:0019065">
    <property type="term" value="P:receptor-mediated endocytosis of virus by host cell"/>
    <property type="evidence" value="ECO:0007669"/>
    <property type="project" value="UniProtKB-KW"/>
</dbReference>
<dbReference type="GO" id="GO:0044694">
    <property type="term" value="P:symbiont genome entry into host cell via pore formation in plasma membrane"/>
    <property type="evidence" value="ECO:0007669"/>
    <property type="project" value="UniProtKB-KW"/>
</dbReference>
<dbReference type="GO" id="GO:0039520">
    <property type="term" value="P:symbiont-mediated activation of host autophagy"/>
    <property type="evidence" value="ECO:0000250"/>
    <property type="project" value="UniProtKB"/>
</dbReference>
<dbReference type="GO" id="GO:0039545">
    <property type="term" value="P:symbiont-mediated suppression of host cytoplasmic pattern recognition receptor signaling pathway via inhibition of MAVS activity"/>
    <property type="evidence" value="ECO:0007669"/>
    <property type="project" value="UniProtKB-KW"/>
</dbReference>
<dbReference type="GO" id="GO:0039554">
    <property type="term" value="P:symbiont-mediated suppression of host cytoplasmic pattern recognition receptor signaling pathway via inhibition of MDA-5 activity"/>
    <property type="evidence" value="ECO:0007669"/>
    <property type="project" value="UniProtKB-KW"/>
</dbReference>
<dbReference type="GO" id="GO:0039540">
    <property type="term" value="P:symbiont-mediated suppression of host cytoplasmic pattern recognition receptor signaling pathway via inhibition of RIG-I activity"/>
    <property type="evidence" value="ECO:0007669"/>
    <property type="project" value="UniProtKB-KW"/>
</dbReference>
<dbReference type="GO" id="GO:0039522">
    <property type="term" value="P:symbiont-mediated suppression of host mRNA export from nucleus"/>
    <property type="evidence" value="ECO:0007669"/>
    <property type="project" value="UniProtKB-KW"/>
</dbReference>
<dbReference type="GO" id="GO:0039694">
    <property type="term" value="P:viral RNA genome replication"/>
    <property type="evidence" value="ECO:0007669"/>
    <property type="project" value="InterPro"/>
</dbReference>
<dbReference type="GO" id="GO:0019062">
    <property type="term" value="P:virion attachment to host cell"/>
    <property type="evidence" value="ECO:0007669"/>
    <property type="project" value="UniProtKB-KW"/>
</dbReference>
<dbReference type="CDD" id="cd23213">
    <property type="entry name" value="Enterovirus_RdRp"/>
    <property type="match status" value="1"/>
</dbReference>
<dbReference type="CDD" id="cd00205">
    <property type="entry name" value="rhv_like"/>
    <property type="match status" value="3"/>
</dbReference>
<dbReference type="FunFam" id="1.20.960.20:FF:000001">
    <property type="entry name" value="Genome polyprotein"/>
    <property type="match status" value="1"/>
</dbReference>
<dbReference type="FunFam" id="2.40.10.10:FF:000018">
    <property type="entry name" value="Genome polyprotein"/>
    <property type="match status" value="1"/>
</dbReference>
<dbReference type="FunFam" id="2.40.10.10:FF:000020">
    <property type="entry name" value="Genome polyprotein"/>
    <property type="match status" value="1"/>
</dbReference>
<dbReference type="FunFam" id="2.40.10.10:FF:000022">
    <property type="entry name" value="Genome polyprotein"/>
    <property type="match status" value="1"/>
</dbReference>
<dbReference type="FunFam" id="2.60.120.20:FF:000001">
    <property type="entry name" value="Genome polyprotein"/>
    <property type="match status" value="1"/>
</dbReference>
<dbReference type="FunFam" id="2.60.120.20:FF:000002">
    <property type="entry name" value="Genome polyprotein"/>
    <property type="match status" value="1"/>
</dbReference>
<dbReference type="FunFam" id="2.60.120.20:FF:000003">
    <property type="entry name" value="Genome polyprotein"/>
    <property type="match status" value="1"/>
</dbReference>
<dbReference type="FunFam" id="3.30.70.270:FF:000008">
    <property type="entry name" value="Genome polyprotein"/>
    <property type="match status" value="1"/>
</dbReference>
<dbReference type="FunFam" id="4.10.880.10:FF:000001">
    <property type="entry name" value="Genome polyprotein"/>
    <property type="match status" value="1"/>
</dbReference>
<dbReference type="Gene3D" id="1.20.960.20">
    <property type="match status" value="1"/>
</dbReference>
<dbReference type="Gene3D" id="2.60.120.20">
    <property type="match status" value="3"/>
</dbReference>
<dbReference type="Gene3D" id="3.30.70.270">
    <property type="match status" value="1"/>
</dbReference>
<dbReference type="Gene3D" id="6.10.20.20">
    <property type="entry name" value="Poliovirus 3A protein-like"/>
    <property type="match status" value="1"/>
</dbReference>
<dbReference type="Gene3D" id="4.10.880.10">
    <property type="entry name" value="Poliovirus 3D polymerase Domain 1 (Nucleotidyltransferase)"/>
    <property type="match status" value="2"/>
</dbReference>
<dbReference type="Gene3D" id="2.40.10.10">
    <property type="entry name" value="Trypsin-like serine proteases"/>
    <property type="match status" value="4"/>
</dbReference>
<dbReference type="InterPro" id="IPR043502">
    <property type="entry name" value="DNA/RNA_pol_sf"/>
</dbReference>
<dbReference type="InterPro" id="IPR000605">
    <property type="entry name" value="Helicase_SF3_ssDNA/RNA_vir"/>
</dbReference>
<dbReference type="InterPro" id="IPR014759">
    <property type="entry name" value="Helicase_SF3_ssRNA_vir"/>
</dbReference>
<dbReference type="InterPro" id="IPR027417">
    <property type="entry name" value="P-loop_NTPase"/>
</dbReference>
<dbReference type="InterPro" id="IPR014838">
    <property type="entry name" value="P3A"/>
</dbReference>
<dbReference type="InterPro" id="IPR036203">
    <property type="entry name" value="P3A_soluble_dom"/>
</dbReference>
<dbReference type="InterPro" id="IPR044067">
    <property type="entry name" value="PCV_3C_PRO"/>
</dbReference>
<dbReference type="InterPro" id="IPR000081">
    <property type="entry name" value="Peptidase_C3"/>
</dbReference>
<dbReference type="InterPro" id="IPR000199">
    <property type="entry name" value="Peptidase_C3A/C3B_picornavir"/>
</dbReference>
<dbReference type="InterPro" id="IPR009003">
    <property type="entry name" value="Peptidase_S1_PA"/>
</dbReference>
<dbReference type="InterPro" id="IPR043504">
    <property type="entry name" value="Peptidase_S1_PA_chymotrypsin"/>
</dbReference>
<dbReference type="InterPro" id="IPR003138">
    <property type="entry name" value="Pico_P1A"/>
</dbReference>
<dbReference type="InterPro" id="IPR002527">
    <property type="entry name" value="Pico_P2B"/>
</dbReference>
<dbReference type="InterPro" id="IPR001676">
    <property type="entry name" value="Picornavirus_capsid"/>
</dbReference>
<dbReference type="InterPro" id="IPR043128">
    <property type="entry name" value="Rev_trsase/Diguanyl_cyclase"/>
</dbReference>
<dbReference type="InterPro" id="IPR033703">
    <property type="entry name" value="Rhv-like"/>
</dbReference>
<dbReference type="InterPro" id="IPR001205">
    <property type="entry name" value="RNA-dir_pol_C"/>
</dbReference>
<dbReference type="InterPro" id="IPR007094">
    <property type="entry name" value="RNA-dir_pol_PSvirus"/>
</dbReference>
<dbReference type="InterPro" id="IPR029053">
    <property type="entry name" value="Viral_coat"/>
</dbReference>
<dbReference type="Pfam" id="PF08727">
    <property type="entry name" value="P3A"/>
    <property type="match status" value="1"/>
</dbReference>
<dbReference type="Pfam" id="PF00548">
    <property type="entry name" value="Peptidase_C3"/>
    <property type="match status" value="1"/>
</dbReference>
<dbReference type="Pfam" id="PF02226">
    <property type="entry name" value="Pico_P1A"/>
    <property type="match status" value="1"/>
</dbReference>
<dbReference type="Pfam" id="PF00947">
    <property type="entry name" value="Pico_P2A"/>
    <property type="match status" value="1"/>
</dbReference>
<dbReference type="Pfam" id="PF01552">
    <property type="entry name" value="Pico_P2B"/>
    <property type="match status" value="1"/>
</dbReference>
<dbReference type="Pfam" id="PF00680">
    <property type="entry name" value="RdRP_1"/>
    <property type="match status" value="1"/>
</dbReference>
<dbReference type="Pfam" id="PF00073">
    <property type="entry name" value="Rhv"/>
    <property type="match status" value="3"/>
</dbReference>
<dbReference type="Pfam" id="PF00910">
    <property type="entry name" value="RNA_helicase"/>
    <property type="match status" value="1"/>
</dbReference>
<dbReference type="SUPFAM" id="SSF56672">
    <property type="entry name" value="DNA/RNA polymerases"/>
    <property type="match status" value="1"/>
</dbReference>
<dbReference type="SUPFAM" id="SSF52540">
    <property type="entry name" value="P-loop containing nucleoside triphosphate hydrolases"/>
    <property type="match status" value="1"/>
</dbReference>
<dbReference type="SUPFAM" id="SSF88633">
    <property type="entry name" value="Positive stranded ssRNA viruses"/>
    <property type="match status" value="2"/>
</dbReference>
<dbReference type="SUPFAM" id="SSF89043">
    <property type="entry name" value="Soluble domain of poliovirus core protein 3a"/>
    <property type="match status" value="1"/>
</dbReference>
<dbReference type="SUPFAM" id="SSF50494">
    <property type="entry name" value="Trypsin-like serine proteases"/>
    <property type="match status" value="2"/>
</dbReference>
<dbReference type="PROSITE" id="PS51874">
    <property type="entry name" value="PCV_3C_PRO"/>
    <property type="match status" value="1"/>
</dbReference>
<dbReference type="PROSITE" id="PS50507">
    <property type="entry name" value="RDRP_SSRNA_POS"/>
    <property type="match status" value="1"/>
</dbReference>
<dbReference type="PROSITE" id="PS51218">
    <property type="entry name" value="SF3_HELICASE_2"/>
    <property type="match status" value="1"/>
</dbReference>
<keyword id="KW-1072">Activation of host autophagy by virus</keyword>
<keyword id="KW-0067">ATP-binding</keyword>
<keyword id="KW-0068">Autocatalytic cleavage</keyword>
<keyword id="KW-0167">Capsid protein</keyword>
<keyword id="KW-1167">Clathrin- and caveolin-independent endocytosis of virus by host</keyword>
<keyword id="KW-0191">Covalent protein-RNA linkage</keyword>
<keyword id="KW-0235">DNA replication</keyword>
<keyword id="KW-1262">Eukaryotic host gene expression shutoff by virus</keyword>
<keyword id="KW-1191">Eukaryotic host transcription shutoff by virus</keyword>
<keyword id="KW-1193">Eukaryotic host translation shutoff by virus</keyword>
<keyword id="KW-0347">Helicase</keyword>
<keyword id="KW-1035">Host cytoplasm</keyword>
<keyword id="KW-1036">Host cytoplasmic vesicle</keyword>
<keyword id="KW-1190">Host gene expression shutoff by virus</keyword>
<keyword id="KW-1043">Host membrane</keyword>
<keyword id="KW-1192">Host mRNA suppression by virus</keyword>
<keyword id="KW-1048">Host nucleus</keyword>
<keyword id="KW-0945">Host-virus interaction</keyword>
<keyword id="KW-0378">Hydrolase</keyword>
<keyword id="KW-1111">Inhibition of eukaryotic host transcription initiation by virus</keyword>
<keyword id="KW-1090">Inhibition of host innate immune response by virus</keyword>
<keyword id="KW-1097">Inhibition of host MAVS by virus</keyword>
<keyword id="KW-1089">Inhibition of host MDA5 by virus</keyword>
<keyword id="KW-1099">Inhibition of host mRNA nuclear export by virus</keyword>
<keyword id="KW-1088">Inhibition of host RIG-I by virus</keyword>
<keyword id="KW-1113">Inhibition of host RLR pathway by virus</keyword>
<keyword id="KW-0407">Ion channel</keyword>
<keyword id="KW-0406">Ion transport</keyword>
<keyword id="KW-0449">Lipoprotein</keyword>
<keyword id="KW-0460">Magnesium</keyword>
<keyword id="KW-0472">Membrane</keyword>
<keyword id="KW-0479">Metal-binding</keyword>
<keyword id="KW-0519">Myristate</keyword>
<keyword id="KW-0547">Nucleotide-binding</keyword>
<keyword id="KW-0548">Nucleotidyltransferase</keyword>
<keyword id="KW-0597">Phosphoprotein</keyword>
<keyword id="KW-1172">Pore-mediated penetration of viral genome into host cell</keyword>
<keyword id="KW-0645">Protease</keyword>
<keyword id="KW-0677">Repeat</keyword>
<keyword id="KW-0694">RNA-binding</keyword>
<keyword id="KW-0696">RNA-directed RNA polymerase</keyword>
<keyword id="KW-1143">T=pseudo3 icosahedral capsid protein</keyword>
<keyword id="KW-0788">Thiol protease</keyword>
<keyword id="KW-0808">Transferase</keyword>
<keyword id="KW-0813">Transport</keyword>
<keyword id="KW-1161">Viral attachment to host cell</keyword>
<keyword id="KW-0899">Viral immunoevasion</keyword>
<keyword id="KW-1182">Viral ion channel</keyword>
<keyword id="KW-1162">Viral penetration into host cytoplasm</keyword>
<keyword id="KW-0693">Viral RNA replication</keyword>
<keyword id="KW-0946">Virion</keyword>
<keyword id="KW-1164">Virus endocytosis by host</keyword>
<keyword id="KW-1160">Virus entry into host cell</keyword>
<keyword id="KW-0862">Zinc</keyword>
<keyword id="KW-0863">Zinc-finger</keyword>
<name>POLG_POL2W</name>
<reference key="1">
    <citation type="journal article" date="1990" name="J. Gen. Virol.">
        <title>Localization of genomic regions specific for the attenuated, mouse-adapted poliovirus type 2 strain W-2.</title>
        <authorList>
            <person name="Pevear D.C."/>
            <person name="Oh C.K."/>
            <person name="Cunningham L.L."/>
            <person name="Calenoff M."/>
            <person name="Jubelt B."/>
        </authorList>
    </citation>
    <scope>NUCLEOTIDE SEQUENCE [GENOMIC RNA]</scope>
</reference>
<protein>
    <recommendedName>
        <fullName>Genome polyprotein</fullName>
    </recommendedName>
    <component>
        <recommendedName>
            <fullName>P1</fullName>
        </recommendedName>
    </component>
    <component>
        <recommendedName>
            <fullName>Capsid protein VP0</fullName>
        </recommendedName>
        <alternativeName>
            <fullName>VP4-VP2</fullName>
        </alternativeName>
    </component>
    <component>
        <recommendedName>
            <fullName>Capsid protein VP4</fullName>
        </recommendedName>
        <alternativeName>
            <fullName>P1A</fullName>
        </alternativeName>
        <alternativeName>
            <fullName>Virion protein 4</fullName>
        </alternativeName>
    </component>
    <component>
        <recommendedName>
            <fullName>Capsid protein VP2</fullName>
        </recommendedName>
        <alternativeName>
            <fullName>P1B</fullName>
        </alternativeName>
        <alternativeName>
            <fullName>Virion protein 2</fullName>
        </alternativeName>
    </component>
    <component>
        <recommendedName>
            <fullName>Capsid protein VP3</fullName>
        </recommendedName>
        <alternativeName>
            <fullName>P1C</fullName>
        </alternativeName>
        <alternativeName>
            <fullName>Virion protein 3</fullName>
        </alternativeName>
    </component>
    <component>
        <recommendedName>
            <fullName>Capsid protein VP1</fullName>
        </recommendedName>
        <alternativeName>
            <fullName>P1D</fullName>
        </alternativeName>
        <alternativeName>
            <fullName>Virion protein 1</fullName>
        </alternativeName>
    </component>
    <component>
        <recommendedName>
            <fullName>P2</fullName>
        </recommendedName>
    </component>
    <component>
        <recommendedName>
            <fullName>Protease 2A</fullName>
            <shortName>P2A</shortName>
            <ecNumber evidence="1">3.4.22.29</ecNumber>
        </recommendedName>
        <alternativeName>
            <fullName>Picornain 2A</fullName>
        </alternativeName>
        <alternativeName>
            <fullName>Protein 2A</fullName>
        </alternativeName>
    </component>
    <component>
        <recommendedName>
            <fullName>Protein 2B</fullName>
            <shortName>P2B</shortName>
        </recommendedName>
    </component>
    <component>
        <recommendedName>
            <fullName>Protein 2C</fullName>
            <shortName>P2C</shortName>
            <ecNumber evidence="1">3.6.1.15</ecNumber>
        </recommendedName>
    </component>
    <component>
        <recommendedName>
            <fullName>P3</fullName>
        </recommendedName>
    </component>
    <component>
        <recommendedName>
            <fullName>Protein 3AB</fullName>
        </recommendedName>
    </component>
    <component>
        <recommendedName>
            <fullName>Protein 3A</fullName>
            <shortName>P3A</shortName>
        </recommendedName>
    </component>
    <component>
        <recommendedName>
            <fullName>Viral protein genome-linked</fullName>
            <shortName>VPg</shortName>
        </recommendedName>
        <alternativeName>
            <fullName>Protein 3B</fullName>
            <shortName>P3B</shortName>
        </alternativeName>
    </component>
    <component>
        <recommendedName>
            <fullName>Protein 3CD</fullName>
            <ecNumber>3.4.22.28</ecNumber>
        </recommendedName>
    </component>
    <component>
        <recommendedName>
            <fullName evidence="11">Protease 3C</fullName>
            <ecNumber evidence="11">3.4.22.28</ecNumber>
        </recommendedName>
        <alternativeName>
            <fullName evidence="11">Picornain 3C</fullName>
            <shortName evidence="11">P3C</shortName>
        </alternativeName>
    </component>
    <component>
        <recommendedName>
            <fullName evidence="9">RNA-directed RNA polymerase</fullName>
            <shortName>RdRp</shortName>
            <ecNumber evidence="9">2.7.7.48</ecNumber>
        </recommendedName>
        <alternativeName>
            <fullName>3D polymerase</fullName>
            <shortName>3Dpol</shortName>
        </alternativeName>
        <alternativeName>
            <fullName>Protein 3D</fullName>
            <shortName>3D</shortName>
        </alternativeName>
    </component>
</protein>
<organismHost>
    <name type="scientific">Homo sapiens</name>
    <name type="common">Human</name>
    <dbReference type="NCBI Taxonomy" id="9606"/>
</organismHost>
<evidence type="ECO:0000250" key="1">
    <source>
        <dbReference type="UniProtKB" id="P03300"/>
    </source>
</evidence>
<evidence type="ECO:0000250" key="2">
    <source>
        <dbReference type="UniProtKB" id="P03301"/>
    </source>
</evidence>
<evidence type="ECO:0000250" key="3">
    <source>
        <dbReference type="UniProtKB" id="P03303"/>
    </source>
</evidence>
<evidence type="ECO:0000250" key="4">
    <source>
        <dbReference type="UniProtKB" id="P03313"/>
    </source>
</evidence>
<evidence type="ECO:0000250" key="5">
    <source>
        <dbReference type="UniProtKB" id="P04936"/>
    </source>
</evidence>
<evidence type="ECO:0000250" key="6">
    <source>
        <dbReference type="UniProtKB" id="Q66478"/>
    </source>
</evidence>
<evidence type="ECO:0000250" key="7">
    <source>
        <dbReference type="UniProtKB" id="Q9QF31"/>
    </source>
</evidence>
<evidence type="ECO:0000255" key="8"/>
<evidence type="ECO:0000255" key="9">
    <source>
        <dbReference type="PROSITE-ProRule" id="PRU00539"/>
    </source>
</evidence>
<evidence type="ECO:0000255" key="10">
    <source>
        <dbReference type="PROSITE-ProRule" id="PRU00551"/>
    </source>
</evidence>
<evidence type="ECO:0000255" key="11">
    <source>
        <dbReference type="PROSITE-ProRule" id="PRU01222"/>
    </source>
</evidence>
<evidence type="ECO:0000256" key="12">
    <source>
        <dbReference type="SAM" id="MobiDB-lite"/>
    </source>
</evidence>
<evidence type="ECO:0000305" key="13"/>
<organism>
    <name type="scientific">Poliovirus type 2 (strain W-2)</name>
    <dbReference type="NCBI Taxonomy" id="12085"/>
    <lineage>
        <taxon>Viruses</taxon>
        <taxon>Riboviria</taxon>
        <taxon>Orthornavirae</taxon>
        <taxon>Pisuviricota</taxon>
        <taxon>Pisoniviricetes</taxon>
        <taxon>Picornavirales</taxon>
        <taxon>Picornaviridae</taxon>
        <taxon>Ensavirinae</taxon>
        <taxon>Enterovirus</taxon>
        <taxon>Enterovirus C</taxon>
    </lineage>
</organism>
<comment type="function">
    <molecule>Capsid protein VP1</molecule>
    <text evidence="1">Forms an icosahedral capsid of pseudo T=3 symmetry with capsid proteins VP2 and VP3 (By similarity). The capsid is 300 Angstroms in diameter, composed of 60 copies of each capsid protein and enclosing the viral positive strand RNA genome (By similarity). Capsid protein VP1 mainly forms the vertices of the capsid (By similarity). Capsid protein VP1 interacts with host cell receptor PVR to provide virion attachment to target host cells (By similarity). This attachment induces virion internalization predominantly through clathrin- and caveolin-independent endocytosis in Hela cells and through caveolin-mediated endocytosis in brain microvascular endothelial cells (By similarity). Tyrosine kinases are probably involved in the entry process (By similarity). Virus binding to PVR induces increased junctional permeability and rearrangement of junctional proteins (By similarity). Modulation of endothelial tight junctions, as well as cytolytic infection of endothelial cells themselves, may result in loss of endothelial integrity which may help the virus to reach the CNS (By similarity). After binding to its receptor, the capsid undergoes conformational changes (By similarity). Capsid protein VP1 N-terminus (that contains an amphipathic alpha-helix) and capsid protein VP4 are externalized (By similarity). Together, they shape a pore in the host membrane through which viral genome is translocated to host cell cytoplasm (By similarity).</text>
</comment>
<comment type="function">
    <molecule>Capsid protein VP2</molecule>
    <text evidence="1">Forms an icosahedral capsid of pseudo T=3 symmetry with capsid proteins VP2 and VP3 (By similarity). The capsid is 300 Angstroms in diameter, composed of 60 copies of each capsid protein and enclosing the viral positive strand RNA genome (By similarity).</text>
</comment>
<comment type="function">
    <molecule>Capsid protein VP3</molecule>
    <text evidence="1">Forms an icosahedral capsid of pseudo T=3 symmetry with capsid proteins VP2 and VP3 (By similarity). The capsid is 300 Angstroms in diameter, composed of 60 copies of each capsid protein and enclosing the viral positive strand RNA genome (By similarity).</text>
</comment>
<comment type="function">
    <molecule>Capsid protein VP4</molecule>
    <text evidence="1">Lies on the inner surface of the capsid shell (By similarity). After binding to the host receptor, the capsid undergoes conformational changes (By similarity). Capsid protein VP4 is released, Capsid protein VP1 N-terminus is externalized, and together, they shape a pore in the host membrane through which the viral genome is translocated into the host cell cytoplasm (By similarity).</text>
</comment>
<comment type="function">
    <molecule>Capsid protein VP0</molecule>
    <text evidence="1">Component of immature procapsids, which is cleaved into capsid proteins VP4 and VP2 after maturation (By similarity). Allows the capsid to remain inactive before the maturation step (By similarity).</text>
</comment>
<comment type="function">
    <molecule>Protease 2A</molecule>
    <text evidence="1 2">Cysteine protease that cleaves viral polyprotein and specific host proteins (By similarity). It is responsible for the autocatalytic cleavage between the P1 and P2 regions, which is the first cleavage occurring in the polyprotein (By similarity). Also cleaves the host translation initiation factor EIF4G1, in order to shut down the capped cellular mRNA translation (By similarity). Inhibits the host nucleus-cytoplasm protein and RNA trafficking by cleaving host members of the nuclear pores including NUP98, NUP62 and NUP153 (By similarity). Counteracts stress granule formation probably by antagonizing its assembly or promoting its dissassembly (By similarity). Cleaves and inhibits host IFIH1/MDA5, thereby inhibiting the type-I IFN production and the establishment of the antiviral state (By similarity). Cleaves and inhibits host MAVS, thereby inhibiting the type-I IFN production and the establishment of the antiviral state (By similarity).</text>
</comment>
<comment type="function">
    <molecule>Protein 2B</molecule>
    <text evidence="1">Plays an essential role in the virus replication cycle by acting as a viroporin. Creates a pore in the host endoplasmic reticulum and as a consequence releases Ca2+ in the cytoplasm of infected cell. In turn, high levels of cytoplasmic calcium may trigger membrane trafficking and transport of viral ER-associated proteins to viroplasms, sites of viral genome replication.</text>
</comment>
<comment type="function">
    <molecule>Protein 2C</molecule>
    <text evidence="1">Induces and associates with structural rearrangements of intracellular membranes. Displays RNA-binding, nucleotide binding and NTPase activities. May play a role in virion morphogenesis and viral RNA encapsidation by interacting with the capsid protein VP3.</text>
</comment>
<comment type="function">
    <molecule>Protein 3AB</molecule>
    <text evidence="1">Localizes the viral replication complex to the surface of membranous vesicles. Together with protein 3CD binds the Cis-Active RNA Element (CRE) which is involved in RNA synthesis initiation. Acts as a cofactor to stimulate the activity of 3D polymerase, maybe through a nucleid acid chaperone activity.</text>
</comment>
<comment type="function">
    <molecule>Protein 3A</molecule>
    <text evidence="1">Localizes the viral replication complex to the surface of membranous vesicles (By similarity). It inhibits host cell endoplasmic reticulum-to-Golgi apparatus transport and causes the disassembly of the Golgi complex, possibly through GBF1 interaction (By similarity). This would result in depletion of MHC, trail receptors and IFN receptors at the host cell surface (By similarity). Plays an essential role in viral RNA replication by recruiting ACBD3 and PI4KB at the viral replication sites, thereby allowing the formation of the rearranged membranous structures where viral replication takes place (By similarity).</text>
</comment>
<comment type="function">
    <molecule>Viral protein genome-linked</molecule>
    <text evidence="1">Acts as a primer for viral RNA replication and remains covalently bound to viral genomic RNA. VPg is uridylylated prior to priming replication into VPg-pUpU. The oriI viral genomic sequence may act as a template for this. The VPg-pUpU is then used as primer on the genomic RNA poly(A) by the RNA-dependent RNA polymerase to replicate the viral genome. During genome replication, the VPg-RNA linkage is removed by the host TDP2, thereby accelerating replication. During the late stage of the replication cycle, host TDP2 is excluded from sites of viral RNA synthesis and encapsidation, allowing for the generation of progeny virions.</text>
</comment>
<comment type="function">
    <molecule>Protein 3CD</molecule>
    <text evidence="1">Involved in the viral replication complex and viral polypeptide maturation. It exhibits protease activity with a specificity and catalytic efficiency that is different from protease 3C. Protein 3CD lacks polymerase activity. Protein 3CD binds to the 5'UTR of the viral genome.</text>
</comment>
<comment type="function">
    <molecule>Protease 3C</molecule>
    <text evidence="1 3">Major viral protease that mediates proteolytic processing of the polyprotein (By similarity). Cleaves host EIF5B, contributing to host translation shutoff (By similarity). Also cleaves host PABPC1, contributing to host translation shutoff (By similarity). Cleaves host RIGI and thus contributes to the inhibition of type I interferon production (By similarity). Cleaves host NLRP1, triggers host N-glycine-mediated degradation of the autoinhibitory NLRP1 N-terminal fragment (By similarity). Inhibits the integrated stress response (ISR) in the infected cell by cleaving host G3BP1 (By similarity). Stress granule formation is thus inhibited, which allows protein synthesis and viral replication (By similarity).</text>
</comment>
<comment type="function">
    <molecule>RNA-directed RNA polymerase</molecule>
    <text evidence="1">Replicates the viral genomic RNA on the surface of intracellular membranes. May form linear arrays of subunits that propagate along a strong head-to-tail interaction called interface-I. Covalently attaches UMP to a tyrosine of VPg, which is used to prime RNA synthesis. The positive stranded RNA genome is first replicated at virus induced membranous vesicles, creating a dsRNA genomic replication form. This dsRNA is then used as template to synthesize positive stranded RNA genomes. ss(+)RNA genomes are either translated, replicated or encapsidated.</text>
</comment>
<comment type="catalytic activity">
    <molecule>Protein 2C</molecule>
    <reaction evidence="1">
        <text>a ribonucleoside 5'-triphosphate + H2O = a ribonucleoside 5'-diphosphate + phosphate + H(+)</text>
        <dbReference type="Rhea" id="RHEA:23680"/>
        <dbReference type="ChEBI" id="CHEBI:15377"/>
        <dbReference type="ChEBI" id="CHEBI:15378"/>
        <dbReference type="ChEBI" id="CHEBI:43474"/>
        <dbReference type="ChEBI" id="CHEBI:57930"/>
        <dbReference type="ChEBI" id="CHEBI:61557"/>
        <dbReference type="EC" id="3.6.1.15"/>
    </reaction>
</comment>
<comment type="catalytic activity">
    <molecule>Protease 2A</molecule>
    <reaction evidence="1">
        <text>Selective cleavage of Tyr-|-Gly bond in the picornavirus polyprotein.</text>
        <dbReference type="EC" id="3.4.22.29"/>
    </reaction>
</comment>
<comment type="catalytic activity">
    <molecule>RNA-directed RNA polymerase</molecule>
    <reaction evidence="9">
        <text>RNA(n) + a ribonucleoside 5'-triphosphate = RNA(n+1) + diphosphate</text>
        <dbReference type="Rhea" id="RHEA:21248"/>
        <dbReference type="Rhea" id="RHEA-COMP:14527"/>
        <dbReference type="Rhea" id="RHEA-COMP:17342"/>
        <dbReference type="ChEBI" id="CHEBI:33019"/>
        <dbReference type="ChEBI" id="CHEBI:61557"/>
        <dbReference type="ChEBI" id="CHEBI:140395"/>
        <dbReference type="EC" id="2.7.7.48"/>
    </reaction>
</comment>
<comment type="catalytic activity">
    <molecule>Protease 3C</molecule>
    <reaction evidence="11">
        <text>Selective cleavage of Gln-|-Gly bond in the poliovirus polyprotein. In other picornavirus reactions Glu may be substituted for Gln, and Ser or Thr for Gly.</text>
        <dbReference type="EC" id="3.4.22.28"/>
    </reaction>
</comment>
<comment type="cofactor">
    <molecule>RNA-directed RNA polymerase</molecule>
    <cofactor evidence="1">
        <name>Mg(2+)</name>
        <dbReference type="ChEBI" id="CHEBI:18420"/>
    </cofactor>
    <text evidence="1 4">Binds 2 magnesium ions that constitute a dinuclear catalytic metal center (By similarity). The magnesium ions are not prebound but only present for catalysis (By similarity). Requires the presence of 3CDpro or 3CPro (By similarity).</text>
</comment>
<comment type="activity regulation">
    <molecule>RNA-directed RNA polymerase</molecule>
    <text evidence="1">Replication or transcription is subject to high level of random mutations by the nucleotide analog ribavirin.</text>
</comment>
<comment type="subunit">
    <molecule>Capsid protein VP0</molecule>
    <text evidence="1">Interacts with capsid protein VP1 and capsid protein VP3 to form heterotrimeric protomers.</text>
</comment>
<comment type="subunit">
    <molecule>Capsid protein VP1</molecule>
    <text evidence="1">Interacts with capsid protein VP0, and capsid protein VP3 to form heterotrimeric protomers (By similarity). Interacts with human PVR (By similarity). Five protomers subsequently associate to form pentamers which serve as building blocks for the capsid (By similarity). Interacts with capsid protein VP2, capsid protein VP3 and capsid protein VP4 following cleavage of capsid protein VP0 (By similarity).</text>
</comment>
<comment type="subunit">
    <molecule>Capsid protein VP2</molecule>
    <text evidence="1">Interacts with capsid protein VP1 and capsid protein VP3 in the mature capsid.</text>
</comment>
<comment type="subunit">
    <molecule>Capsid protein VP3</molecule>
    <text evidence="1">Interacts with capsid protein VP0 and capsid protein VP1 to form heterotrimeric protomers (By similarity). Five protomers subsequently associate to form pentamers which serve as building blocks for the capsid (By similarity). Interacts with capsid protein VP4 in the mature capsid (By similarity). Interacts with protein 2C; this interaction may be important for virion morphogenesis (By similarity).</text>
</comment>
<comment type="subunit">
    <molecule>Capsid protein VP4</molecule>
    <text evidence="1">Interacts with capsid protein VP1 and capsid protein VP3.</text>
</comment>
<comment type="subunit">
    <molecule>Protease 2A</molecule>
    <text evidence="5">Homodimer.</text>
</comment>
<comment type="subunit">
    <molecule>Protein 2C</molecule>
    <text evidence="1">Homohexamer; forms a hexameric ring structure with 6-fold symmetry characteristic of AAA+ ATPases (By similarity). Interacts (via N-terminus) with host RTN3 (via reticulon domain); this interaction is important for viral replication (By similarity). Interacts with capsid protein VP3; this interaction may be important for virion morphogenesis (By similarity).</text>
</comment>
<comment type="subunit">
    <molecule>Protein 3AB</molecule>
    <text evidence="1">Interacts with protein 3CD.</text>
</comment>
<comment type="subunit">
    <molecule>Protein 3A</molecule>
    <text evidence="1">Homodimer (By similarity). Interacts with host GBF1 (By similarity). Interacts (via GOLD domain) with host ACBD3 (via GOLD domain); this interaction allows the formation of a viral protein 3A/ACBD3 heterotetramer with a 2:2 stoichiometry, which will stimulate the recruitment of host PI4KB in order to synthesize PI4P at the viral RNA replication sites (By similarity).</text>
</comment>
<comment type="subunit">
    <molecule>Viral protein genome-linked</molecule>
    <text evidence="1">Interacts with RNA-directed RNA polymerase.</text>
</comment>
<comment type="subunit">
    <molecule>Protein 3CD</molecule>
    <text evidence="1">Interacts with protein 3AB and with RNA-directed RNA polymerase.</text>
</comment>
<comment type="subunit">
    <molecule>RNA-directed RNA polymerase</molecule>
    <text evidence="1">Interacts with Viral protein genome-linked and with protein 3CD.</text>
</comment>
<comment type="subcellular location">
    <molecule>Capsid protein VP0</molecule>
    <subcellularLocation>
        <location>Virion</location>
    </subcellularLocation>
    <subcellularLocation>
        <location evidence="13">Host cytoplasm</location>
    </subcellularLocation>
</comment>
<comment type="subcellular location">
    <molecule>Capsid protein VP4</molecule>
    <subcellularLocation>
        <location>Virion</location>
    </subcellularLocation>
</comment>
<comment type="subcellular location">
    <molecule>Capsid protein VP2</molecule>
    <subcellularLocation>
        <location evidence="1">Virion</location>
    </subcellularLocation>
    <subcellularLocation>
        <location evidence="13">Host cytoplasm</location>
    </subcellularLocation>
</comment>
<comment type="subcellular location">
    <molecule>Capsid protein VP3</molecule>
    <subcellularLocation>
        <location evidence="1">Virion</location>
    </subcellularLocation>
    <subcellularLocation>
        <location evidence="13">Host cytoplasm</location>
    </subcellularLocation>
</comment>
<comment type="subcellular location">
    <molecule>Capsid protein VP1</molecule>
    <subcellularLocation>
        <location evidence="1">Virion</location>
    </subcellularLocation>
    <subcellularLocation>
        <location evidence="13">Host cytoplasm</location>
    </subcellularLocation>
</comment>
<comment type="subcellular location">
    <molecule>Protein 2B</molecule>
    <subcellularLocation>
        <location evidence="13">Host cytoplasmic vesicle membrane</location>
        <topology evidence="13">Peripheral membrane protein</topology>
        <orientation evidence="13">Cytoplasmic side</orientation>
    </subcellularLocation>
    <text>Probably localizes to the surface of intracellular membrane vesicles that are induced after virus infection as the site for viral RNA replication. These vesicles are derived from the endoplasmic reticulum.</text>
</comment>
<comment type="subcellular location">
    <molecule>Protein 2C</molecule>
    <subcellularLocation>
        <location evidence="13">Host cytoplasmic vesicle membrane</location>
        <topology evidence="13">Peripheral membrane protein</topology>
        <orientation evidence="13">Cytoplasmic side</orientation>
    </subcellularLocation>
    <text>Probably localizes to the surface of intracellular membrane vesicles that are induced after virus infection as the site for viral RNA replication. These vesicles are derived from the endoplasmic reticulum.</text>
</comment>
<comment type="subcellular location">
    <molecule>Protein 3A</molecule>
    <subcellularLocation>
        <location evidence="13">Host cytoplasmic vesicle membrane</location>
        <topology evidence="13">Peripheral membrane protein</topology>
        <orientation evidence="13">Cytoplasmic side</orientation>
    </subcellularLocation>
    <text>Probably localizes to the surface of intracellular membrane vesicles that are induced after virus infection as the site for viral RNA replication. These vesicles are derived from the endoplasmic reticulum.</text>
</comment>
<comment type="subcellular location">
    <molecule>Protein 3AB</molecule>
    <subcellularLocation>
        <location evidence="13">Host cytoplasmic vesicle membrane</location>
        <topology evidence="13">Peripheral membrane protein</topology>
        <orientation evidence="13">Cytoplasmic side</orientation>
    </subcellularLocation>
    <text>Probably localizes to the surface of intracellular membrane vesicles that are induced after virus infection as the site for viral RNA replication. These vesicles are derived from the endoplasmic reticulum.</text>
</comment>
<comment type="subcellular location">
    <molecule>Viral protein genome-linked</molecule>
    <subcellularLocation>
        <location evidence="1">Virion</location>
    </subcellularLocation>
    <subcellularLocation>
        <location evidence="6">Host cytoplasm</location>
    </subcellularLocation>
</comment>
<comment type="subcellular location">
    <molecule>Protease 3C</molecule>
    <subcellularLocation>
        <location>Host cytoplasm</location>
    </subcellularLocation>
</comment>
<comment type="subcellular location">
    <molecule>Protein 3CD</molecule>
    <subcellularLocation>
        <location evidence="1">Host nucleus</location>
    </subcellularLocation>
    <subcellularLocation>
        <location evidence="1">Host cytoplasm</location>
    </subcellularLocation>
    <subcellularLocation>
        <location evidence="13">Host cytoplasmic vesicle membrane</location>
        <topology evidence="13">Peripheral membrane protein</topology>
        <orientation evidence="13">Cytoplasmic side</orientation>
    </subcellularLocation>
    <text>Probably localizes to the surface of intracellular membrane vesicles that are induced after virus infection as the site for viral RNA replication. These vesicles are derived from the endoplasmic reticulum.</text>
</comment>
<comment type="subcellular location">
    <molecule>RNA-directed RNA polymerase</molecule>
    <subcellularLocation>
        <location evidence="13">Host cytoplasmic vesicle membrane</location>
        <topology evidence="13">Peripheral membrane protein</topology>
        <orientation evidence="13">Cytoplasmic side</orientation>
    </subcellularLocation>
    <text>Probably localizes to the surface of intracellular membrane vesicles that are induced after virus infection as the site for viral RNA replication. These vesicles are derived from the endoplasmic reticulum.</text>
</comment>
<comment type="domain">
    <molecule>Protein 2C</molecule>
    <text evidence="1">The N-terminus has membrane-binding (By similarity). The N-terminus also displays RNA-binding properties (By similarity). The N-terminus is involved in oligomerization (By similarity). The central part contains an ATPase domain and a C4-type zinc-finger (By similarity). The C-terminus is involved in RNA-binding (By similarity). The extreme C-terminus contains a region involved in oligomerization (By similarity).</text>
</comment>
<comment type="PTM">
    <molecule>Genome polyprotein</molecule>
    <text evidence="1">Specific enzymatic cleavages in vivo by the viral proteases yield processing intermediates and the mature proteins.</text>
</comment>
<comment type="PTM">
    <molecule>Capsid protein VP0</molecule>
    <text evidence="1">Myristoylation is required for the formation of pentamers during virus assembly. Further assembly of 12 pentamers and a molecule of genomic RNA generates the provirion.</text>
</comment>
<comment type="PTM">
    <molecule>Capsid protein VP0</molecule>
    <text evidence="1">During virion maturation, immature virions are rendered infectious following cleavage of VP0 into VP4 and VP2. This maturation seems to be an autocatalytic event triggered by the presence of RNA in the capsid and it is followed by a conformational change infectious virion.</text>
</comment>
<comment type="PTM">
    <molecule>Capsid protein VP4</molecule>
    <text evidence="1">Myristoylation is required during RNA encapsidation and formation of the mature virus particle.</text>
</comment>
<comment type="PTM">
    <molecule>Viral protein genome-linked</molecule>
    <text evidence="1">VPg is uridylylated by the polymerase into VPg-pUpU. This acts as a nucleotide-peptide primer for the genomic RNA replication.</text>
</comment>
<comment type="similarity">
    <text evidence="13">Belongs to the picornaviruses polyprotein family.</text>
</comment>
<accession>P23069</accession>
<sequence>MGAQVSSQKVGAHENSNRAYGGSTINYTTINYYRDSASNAASKQDFAQDPSKFTEPIKDVLIKTAPTLNSPNIEACGYSDRVMQLTLGNSTITTQEAANSVVAYGRWPEYIKDSEANPVDQPTEPDVAACRFYTLDTVTWRKESRGWWWKLPDALKDMGLFGQNMFYHYLGRASYTVHVQCNASKFHQGALGVFAVPEMCLAGDSATHMLTKYENANPGEKGGEFKGSFTLDTNATNPARNFCPVDYLFGSGVLAGNAFVYPHQIINLRTNNCATLVLPYVNSLSIDSMTKHNNWGIAILPLAPLDFATESSTEIPITLTIAPMCCEFNGLRNITVPRTQGLPVLNTPGSNQYLTADNYQSPCAIPEFDVTPPIDIPGEVRNMMELAEIDTMIPLNLTSQRKNTMDMYRVELNDAAHSDTPILCLSLSPASDPRLAHTMLGEILNYYTHWAGSLKFTFLFCGSMMATGKLLVSYAPPGAKAPESRKEAMLGTHVIWDIGLQSSCTMVVPWISNTTYRQTINDSFTEGGYISMFYQTRVVVPLSTPRKMDILGFVSACNDFSVRLLRDTTHISQEVMPQGLGDLIEGVVEGVTRNALTPLTPVNNLPDTRSSGPAHSKETPALTAVETGATNPLVPSDTVQTRHVIQKRTRSESTVESFFARGACVAIIEVDNDAPTRRASKLFSVWKITYKDTVQLRRKLEFFTYSRFDMEFTFVVTSNYTDANNGHALNQVYQIMYIPPGAPIPGKRNDYTWQTSSNPSVFYTYGAPPARISVPYVGIANAYSHFYDGFAKVPLAGQASTEGDSLYGAASLNDFGSLAVRVVNDHNPTKLTSKIRVYMKPKHVRVWCPRPPRAVPYYGPGVDYKDGLTPLPEKGLITYGFGHQNKAVYTAGYKICNYHLATQEDLQNAINIMWIRDLLVVESKAQGIDSIARCNCHTGVYYCESRRKYYPVSFVGPTFQYMEANEYYPARYQSHMLIGHGFASPGDCGGILRCQHGVIGIITAGGEGLVAFSDIRDLYAYEVEAMEQGVSNYIESLGAAFGSGFTQQIGNKISELTSMVTSTITEKLLKNLIKIISSLVIITRNYEDTTTVLATLALLGCDASPWQWLKKKACDILEIPYIMRQGDSWLKKFTEACNAAKGLEWVSNKISKFIDWLKEKIIPQARDKLEFVTKLKQLEMLENQIATIHQSCPSQEHQEILFNNVRWLSIQSRRFAPLYAVEAKRIQKLEHTINNYVQFKSKHRIEPVCLLVHGSPGTGKSVATNLIARAIAEKENTSTYSLPPDPSHFDGYKQQGVVIMDDLNQNPDGADMKLFCQMVSTVEFIPPMASLEEKGILFTSNYVLASTNSSRITPPTVAHSDALARRFAFDMDIQIMSEYSRDGKLNMAMATEMCKNCHQPANFKRCCPLVCGKAIQLMDKSSRVRYSIDQITTMIINERNRRSSIGNCMEALFQSPLQYKDLKIDIKTTPPPECINDLLHAVDSQEVRDYCEKKGWIADITSQVQTERNINRAMTILQAVTTFAAVAGVVYVMYKLFAGHQGAYTGLPNKRPNVPTIRTAKVQGPGFDYAVAMAKRNILTATTIKGEFTMLGVHDNVAILPTHASPGETIVIDGKEVEVLDAKALEDQAGTNLEITIVTLKRNEKFRDIRPHIPTQITETNDGVLIVNTSKYPNMYVPVGAVTEQGYLNLGGRQTARTLMYNFPTRAGQCGGVITCTGKVIGMHVGGNGSHGFAAALKRSYFTQSQGEIQWMRPSKEVGYPVINAPSKTKLEPSAFHYVFEGVKEPAVLTKSDPRLKTDFEEAIFSKYVGNKITEVDEYMKEAVDHYAGQLMSLDINTEQMCLEDAMYGTDGLEALDLSTSAGYPYVAMGKKKRDILNKQTRDTKEMQRLLDTYGINLPLVTYVKDELRSKTKVEQGKSRLIEASSLNDSVAMRMAFGNLYAAFHKNPGVVTGSAVGCDPDLFWSKIPVLMEEKLFDYTGYDASLSPAWFEALKMVLEKIGFGDRVDYIDYLNHSHHLYKNKTYCVKGGMPSGCSGTSIFNSMINNLIIRTLLLKTYKGIDLDHLKMIAYGDDVIASYPHEVDASLLAQSGKDYGLTMTPADKSATFETVTWENVTFLKRFFRADEKYPFLVHPVMPMKEIHESIRWTKDPRNTQDHVRSLCLLAWHSGEEEYNKFLAKIRSVPIGRALLLPEYSTLYRRWLDSF</sequence>
<proteinExistence type="inferred from homology"/>
<feature type="initiator methionine" description="Removed; by host" evidence="1">
    <location>
        <position position="1"/>
    </location>
</feature>
<feature type="chain" id="PRO_0000426626" description="Genome polyprotein">
    <location>
        <begin position="2"/>
        <end position="2205"/>
    </location>
</feature>
<feature type="chain" id="PRO_0000426627" description="P1">
    <location>
        <begin position="2"/>
        <end position="879"/>
    </location>
</feature>
<feature type="chain" id="PRO_0000426628" description="Capsid protein VP0">
    <location>
        <begin position="2"/>
        <end position="340"/>
    </location>
</feature>
<feature type="chain" id="PRO_0000426629" description="Capsid protein VP4">
    <location>
        <begin position="2"/>
        <end position="69"/>
    </location>
</feature>
<feature type="chain" id="PRO_0000426630" description="Capsid protein VP2">
    <location>
        <begin position="70"/>
        <end position="340"/>
    </location>
</feature>
<feature type="chain" id="PRO_0000426631" description="Capsid protein VP3">
    <location>
        <begin position="341"/>
        <end position="578"/>
    </location>
</feature>
<feature type="chain" id="PRO_0000426632" description="Capsid protein VP1">
    <location>
        <begin position="579"/>
        <end position="879"/>
    </location>
</feature>
<feature type="chain" id="PRO_0000426633" description="P2">
    <location>
        <begin position="880"/>
        <end position="1454"/>
    </location>
</feature>
<feature type="chain" id="PRO_0000426634" description="Protease 2A">
    <location>
        <begin position="880"/>
        <end position="1028"/>
    </location>
</feature>
<feature type="chain" id="PRO_0000040118" description="Protein 2B">
    <location>
        <begin position="1029"/>
        <end position="1125"/>
    </location>
</feature>
<feature type="chain" id="PRO_0000040119" description="Protein 2C">
    <location>
        <begin position="1126"/>
        <end position="1454"/>
    </location>
</feature>
<feature type="chain" id="PRO_0000426635" description="P3">
    <location>
        <begin position="1455"/>
        <end position="2205"/>
    </location>
</feature>
<feature type="chain" id="PRO_0000426636" description="Protein 3AB">
    <location>
        <begin position="1455"/>
        <end position="1563"/>
    </location>
</feature>
<feature type="chain" id="PRO_0000040120" description="Protein 3A">
    <location>
        <begin position="1455"/>
        <end position="1541"/>
    </location>
</feature>
<feature type="chain" id="PRO_0000426637" description="Viral protein genome-linked">
    <location>
        <begin position="1542"/>
        <end position="1563"/>
    </location>
</feature>
<feature type="chain" id="PRO_0000426638" description="Protein 3CD">
    <location>
        <begin position="1564"/>
        <end position="2205"/>
    </location>
</feature>
<feature type="chain" id="PRO_0000426639" description="Protease 3C">
    <location>
        <begin position="1564"/>
        <end position="1746"/>
    </location>
</feature>
<feature type="chain" id="PRO_0000426640" description="RNA-directed RNA polymerase">
    <location>
        <begin position="1747"/>
        <end position="2205"/>
    </location>
</feature>
<feature type="topological domain" description="Cytoplasmic" evidence="8">
    <location>
        <begin position="2"/>
        <end position="1518"/>
    </location>
</feature>
<feature type="intramembrane region" evidence="8">
    <location>
        <begin position="1519"/>
        <end position="1534"/>
    </location>
</feature>
<feature type="topological domain" description="Cytoplasmic" evidence="8">
    <location>
        <begin position="1535"/>
        <end position="2205"/>
    </location>
</feature>
<feature type="domain" description="SF3 helicase" evidence="10">
    <location>
        <begin position="1230"/>
        <end position="1386"/>
    </location>
</feature>
<feature type="domain" description="Peptidase C3" evidence="11">
    <location>
        <begin position="1564"/>
        <end position="1742"/>
    </location>
</feature>
<feature type="domain" description="RdRp catalytic" evidence="9">
    <location>
        <begin position="1971"/>
        <end position="2086"/>
    </location>
</feature>
<feature type="zinc finger region" description="C4-type" evidence="1">
    <location>
        <begin position="1394"/>
        <end position="1411"/>
    </location>
</feature>
<feature type="region of interest" description="Amphipathic alpha-helix" evidence="8">
    <location>
        <begin position="579"/>
        <end position="599"/>
    </location>
</feature>
<feature type="region of interest" description="Disordered" evidence="12">
    <location>
        <begin position="598"/>
        <end position="619"/>
    </location>
</feature>
<feature type="region of interest" description="Oligomerization" evidence="1">
    <location>
        <begin position="1126"/>
        <end position="1264"/>
    </location>
</feature>
<feature type="region of interest" description="Membrane-binding" evidence="1">
    <location>
        <begin position="1126"/>
        <end position="1198"/>
    </location>
</feature>
<feature type="region of interest" description="RNA-binding" evidence="1">
    <location>
        <begin position="1147"/>
        <end position="1151"/>
    </location>
</feature>
<feature type="region of interest" description="RNA-binding" evidence="1">
    <location>
        <begin position="1438"/>
        <end position="1445"/>
    </location>
</feature>
<feature type="region of interest" description="Oligomerization" evidence="1">
    <location>
        <begin position="1449"/>
        <end position="1454"/>
    </location>
</feature>
<feature type="compositionally biased region" description="Polar residues" evidence="12">
    <location>
        <begin position="598"/>
        <end position="613"/>
    </location>
</feature>
<feature type="active site" description="For protease 2A activity" evidence="1">
    <location>
        <position position="899"/>
    </location>
</feature>
<feature type="active site" description="For protease 2A activity" evidence="1">
    <location>
        <position position="917"/>
    </location>
</feature>
<feature type="active site" description="For protease 2A activity" evidence="1">
    <location>
        <position position="988"/>
    </location>
</feature>
<feature type="active site" description="For protease 3C activity" evidence="11">
    <location>
        <position position="1603"/>
    </location>
</feature>
<feature type="active site" description="For protease 3C activity" evidence="11">
    <location>
        <position position="1634"/>
    </location>
</feature>
<feature type="active site" description="For protease 3C activity" evidence="11">
    <location>
        <position position="1710"/>
    </location>
</feature>
<feature type="binding site" evidence="7">
    <location>
        <position position="934"/>
    </location>
    <ligand>
        <name>Zn(2+)</name>
        <dbReference type="ChEBI" id="CHEBI:29105"/>
        <label>1</label>
        <note>structural</note>
    </ligand>
</feature>
<feature type="binding site" evidence="7">
    <location>
        <position position="936"/>
    </location>
    <ligand>
        <name>Zn(2+)</name>
        <dbReference type="ChEBI" id="CHEBI:29105"/>
        <label>1</label>
        <note>structural</note>
    </ligand>
</feature>
<feature type="binding site" evidence="7">
    <location>
        <position position="994"/>
    </location>
    <ligand>
        <name>Zn(2+)</name>
        <dbReference type="ChEBI" id="CHEBI:29105"/>
        <label>1</label>
        <note>structural</note>
    </ligand>
</feature>
<feature type="binding site" evidence="7">
    <location>
        <position position="996"/>
    </location>
    <ligand>
        <name>Zn(2+)</name>
        <dbReference type="ChEBI" id="CHEBI:29105"/>
        <label>1</label>
        <note>structural</note>
    </ligand>
</feature>
<feature type="binding site" evidence="10">
    <location>
        <begin position="1254"/>
        <end position="1261"/>
    </location>
    <ligand>
        <name>ATP</name>
        <dbReference type="ChEBI" id="CHEBI:30616"/>
    </ligand>
</feature>
<feature type="binding site" evidence="1">
    <location>
        <position position="1394"/>
    </location>
    <ligand>
        <name>Zn(2+)</name>
        <dbReference type="ChEBI" id="CHEBI:29105"/>
        <label>2</label>
    </ligand>
</feature>
<feature type="binding site" evidence="1">
    <location>
        <position position="1397"/>
    </location>
    <ligand>
        <name>Zn(2+)</name>
        <dbReference type="ChEBI" id="CHEBI:29105"/>
        <label>2</label>
    </ligand>
</feature>
<feature type="binding site" evidence="1">
    <location>
        <position position="1406"/>
    </location>
    <ligand>
        <name>Zn(2+)</name>
        <dbReference type="ChEBI" id="CHEBI:29105"/>
        <label>2</label>
    </ligand>
</feature>
<feature type="binding site" evidence="1">
    <location>
        <position position="1411"/>
    </location>
    <ligand>
        <name>Zn(2+)</name>
        <dbReference type="ChEBI" id="CHEBI:29105"/>
        <label>2</label>
    </ligand>
</feature>
<feature type="binding site" evidence="1">
    <location>
        <position position="1977"/>
    </location>
    <ligand>
        <name>Mg(2+)</name>
        <dbReference type="ChEBI" id="CHEBI:18420"/>
        <label>1</label>
        <note>catalytic; for RdRp activity</note>
    </ligand>
</feature>
<feature type="binding site" evidence="1">
    <location>
        <position position="1977"/>
    </location>
    <ligand>
        <name>Mg(2+)</name>
        <dbReference type="ChEBI" id="CHEBI:18420"/>
        <label>2</label>
        <note>catalytic; for RdRp activity</note>
    </ligand>
</feature>
<feature type="binding site" evidence="1">
    <location>
        <position position="2072"/>
    </location>
    <ligand>
        <name>Mg(2+)</name>
        <dbReference type="ChEBI" id="CHEBI:18420"/>
        <label>1</label>
        <note>catalytic; for RdRp activity</note>
    </ligand>
</feature>
<feature type="binding site" evidence="1">
    <location>
        <position position="2072"/>
    </location>
    <ligand>
        <name>Mg(2+)</name>
        <dbReference type="ChEBI" id="CHEBI:18420"/>
        <label>2</label>
        <note>catalytic; for RdRp activity</note>
    </ligand>
</feature>
<feature type="site" description="Cleavage; by autolysis" evidence="1">
    <location>
        <begin position="69"/>
        <end position="70"/>
    </location>
</feature>
<feature type="site" description="Cleavage; by protease 3C" evidence="2">
    <location>
        <begin position="340"/>
        <end position="341"/>
    </location>
</feature>
<feature type="site" description="Cleavage; by autolysis" evidence="2">
    <location>
        <begin position="879"/>
        <end position="880"/>
    </location>
</feature>
<feature type="site" description="Cleavage; by protease 3C" evidence="2">
    <location>
        <begin position="1028"/>
        <end position="1029"/>
    </location>
</feature>
<feature type="site" description="Cleavage; by protease 3C" evidence="2">
    <location>
        <begin position="1125"/>
        <end position="1126"/>
    </location>
</feature>
<feature type="site" description="Involved in the interaction with host RTN3" evidence="6">
    <location>
        <position position="1150"/>
    </location>
</feature>
<feature type="site" description="Cleavage; by protease 3C" evidence="2">
    <location>
        <begin position="1541"/>
        <end position="1542"/>
    </location>
</feature>
<feature type="site" description="Cleavage; by protease 3C" evidence="2">
    <location>
        <begin position="1563"/>
        <end position="1564"/>
    </location>
</feature>
<feature type="site" description="Cleavage; by protease 3C" evidence="2">
    <location>
        <begin position="1746"/>
        <end position="1747"/>
    </location>
</feature>
<feature type="modified residue" description="O-(5'-phospho-RNA)-tyrosine" evidence="1">
    <location>
        <position position="1544"/>
    </location>
</feature>
<feature type="lipid moiety-binding region" description="N-myristoyl glycine; by host" evidence="1">
    <location>
        <position position="2"/>
    </location>
</feature>